<protein>
    <recommendedName>
        <fullName evidence="1">Phosphoribosylaminoimidazole-succinocarboxamide synthase</fullName>
        <ecNumber evidence="1">6.3.2.6</ecNumber>
    </recommendedName>
    <alternativeName>
        <fullName evidence="1">SAICAR synthetase</fullName>
    </alternativeName>
</protein>
<name>PUR7_CAMJE</name>
<accession>Q9PHZ9</accession>
<accession>Q0PB03</accession>
<evidence type="ECO:0000255" key="1">
    <source>
        <dbReference type="HAMAP-Rule" id="MF_00137"/>
    </source>
</evidence>
<feature type="chain" id="PRO_0000100811" description="Phosphoribosylaminoimidazole-succinocarboxamide synthase">
    <location>
        <begin position="1"/>
        <end position="236"/>
    </location>
</feature>
<gene>
    <name evidence="1" type="primary">purC</name>
    <name type="ordered locus">Cj0512</name>
</gene>
<proteinExistence type="inferred from homology"/>
<reference key="1">
    <citation type="journal article" date="2000" name="Nature">
        <title>The genome sequence of the food-borne pathogen Campylobacter jejuni reveals hypervariable sequences.</title>
        <authorList>
            <person name="Parkhill J."/>
            <person name="Wren B.W."/>
            <person name="Mungall K.L."/>
            <person name="Ketley J.M."/>
            <person name="Churcher C.M."/>
            <person name="Basham D."/>
            <person name="Chillingworth T."/>
            <person name="Davies R.M."/>
            <person name="Feltwell T."/>
            <person name="Holroyd S."/>
            <person name="Jagels K."/>
            <person name="Karlyshev A.V."/>
            <person name="Moule S."/>
            <person name="Pallen M.J."/>
            <person name="Penn C.W."/>
            <person name="Quail M.A."/>
            <person name="Rajandream M.A."/>
            <person name="Rutherford K.M."/>
            <person name="van Vliet A.H.M."/>
            <person name="Whitehead S."/>
            <person name="Barrell B.G."/>
        </authorList>
    </citation>
    <scope>NUCLEOTIDE SEQUENCE [LARGE SCALE GENOMIC DNA]</scope>
    <source>
        <strain>ATCC 700819 / NCTC 11168</strain>
    </source>
</reference>
<organism>
    <name type="scientific">Campylobacter jejuni subsp. jejuni serotype O:2 (strain ATCC 700819 / NCTC 11168)</name>
    <dbReference type="NCBI Taxonomy" id="192222"/>
    <lineage>
        <taxon>Bacteria</taxon>
        <taxon>Pseudomonadati</taxon>
        <taxon>Campylobacterota</taxon>
        <taxon>Epsilonproteobacteria</taxon>
        <taxon>Campylobacterales</taxon>
        <taxon>Campylobacteraceae</taxon>
        <taxon>Campylobacter</taxon>
    </lineage>
</organism>
<comment type="catalytic activity">
    <reaction evidence="1">
        <text>5-amino-1-(5-phospho-D-ribosyl)imidazole-4-carboxylate + L-aspartate + ATP = (2S)-2-[5-amino-1-(5-phospho-beta-D-ribosyl)imidazole-4-carboxamido]succinate + ADP + phosphate + 2 H(+)</text>
        <dbReference type="Rhea" id="RHEA:22628"/>
        <dbReference type="ChEBI" id="CHEBI:15378"/>
        <dbReference type="ChEBI" id="CHEBI:29991"/>
        <dbReference type="ChEBI" id="CHEBI:30616"/>
        <dbReference type="ChEBI" id="CHEBI:43474"/>
        <dbReference type="ChEBI" id="CHEBI:58443"/>
        <dbReference type="ChEBI" id="CHEBI:77657"/>
        <dbReference type="ChEBI" id="CHEBI:456216"/>
        <dbReference type="EC" id="6.3.2.6"/>
    </reaction>
</comment>
<comment type="pathway">
    <text evidence="1">Purine metabolism; IMP biosynthesis via de novo pathway; 5-amino-1-(5-phospho-D-ribosyl)imidazole-4-carboxamide from 5-amino-1-(5-phospho-D-ribosyl)imidazole-4-carboxylate: step 1/2.</text>
</comment>
<comment type="similarity">
    <text evidence="1">Belongs to the SAICAR synthetase family.</text>
</comment>
<sequence>MTKKEMLYEGKGKKLFKTDDENLLISEFKDDLTAFNAEKRGNESGKGALNCKISTEIFHLLEKNGIKTHLVEIISDTEQVVKKCKIVPIEVIVRNVATGSLTKRLGIKDGTVLPFALVEFCLKDDALGDPFINDEHCLILNLVQNEAQISEIKNMARKINSILTPFFDNKNLRLIDFKIELGLTKDNELVLADEISPDSCRFWDKFSNEKLDKDRFRQDLGNVKMAYEEVLKRILN</sequence>
<dbReference type="EC" id="6.3.2.6" evidence="1"/>
<dbReference type="EMBL" id="AL111168">
    <property type="protein sequence ID" value="CAL34659.1"/>
    <property type="molecule type" value="Genomic_DNA"/>
</dbReference>
<dbReference type="PIR" id="A81397">
    <property type="entry name" value="A81397"/>
</dbReference>
<dbReference type="RefSeq" id="WP_002858572.1">
    <property type="nucleotide sequence ID" value="NZ_SZUC01000002.1"/>
</dbReference>
<dbReference type="RefSeq" id="YP_002343944.1">
    <property type="nucleotide sequence ID" value="NC_002163.1"/>
</dbReference>
<dbReference type="SMR" id="Q9PHZ9"/>
<dbReference type="IntAct" id="Q9PHZ9">
    <property type="interactions" value="13"/>
</dbReference>
<dbReference type="STRING" id="192222.Cj0512"/>
<dbReference type="PaxDb" id="192222-Cj0512"/>
<dbReference type="EnsemblBacteria" id="CAL34659">
    <property type="protein sequence ID" value="CAL34659"/>
    <property type="gene ID" value="Cj0512"/>
</dbReference>
<dbReference type="GeneID" id="904841"/>
<dbReference type="KEGG" id="cje:Cj0512"/>
<dbReference type="PATRIC" id="fig|192222.6.peg.505"/>
<dbReference type="eggNOG" id="COG0152">
    <property type="taxonomic scope" value="Bacteria"/>
</dbReference>
<dbReference type="HOGENOM" id="CLU_061495_2_0_7"/>
<dbReference type="OrthoDB" id="9801549at2"/>
<dbReference type="UniPathway" id="UPA00074">
    <property type="reaction ID" value="UER00131"/>
</dbReference>
<dbReference type="Proteomes" id="UP000000799">
    <property type="component" value="Chromosome"/>
</dbReference>
<dbReference type="GO" id="GO:0005524">
    <property type="term" value="F:ATP binding"/>
    <property type="evidence" value="ECO:0007669"/>
    <property type="project" value="UniProtKB-KW"/>
</dbReference>
<dbReference type="GO" id="GO:0004639">
    <property type="term" value="F:phosphoribosylaminoimidazolesuccinocarboxamide synthase activity"/>
    <property type="evidence" value="ECO:0007669"/>
    <property type="project" value="UniProtKB-UniRule"/>
</dbReference>
<dbReference type="GO" id="GO:0006189">
    <property type="term" value="P:'de novo' IMP biosynthetic process"/>
    <property type="evidence" value="ECO:0007669"/>
    <property type="project" value="UniProtKB-UniRule"/>
</dbReference>
<dbReference type="GO" id="GO:0009236">
    <property type="term" value="P:cobalamin biosynthetic process"/>
    <property type="evidence" value="ECO:0007669"/>
    <property type="project" value="InterPro"/>
</dbReference>
<dbReference type="CDD" id="cd01415">
    <property type="entry name" value="SAICAR_synt_PurC"/>
    <property type="match status" value="1"/>
</dbReference>
<dbReference type="FunFam" id="3.30.470.20:FF:000006">
    <property type="entry name" value="Phosphoribosylaminoimidazole-succinocarboxamide synthase"/>
    <property type="match status" value="1"/>
</dbReference>
<dbReference type="Gene3D" id="3.30.470.20">
    <property type="entry name" value="ATP-grasp fold, B domain"/>
    <property type="match status" value="1"/>
</dbReference>
<dbReference type="Gene3D" id="3.30.200.20">
    <property type="entry name" value="Phosphorylase Kinase, domain 1"/>
    <property type="match status" value="1"/>
</dbReference>
<dbReference type="HAMAP" id="MF_00137">
    <property type="entry name" value="SAICAR_synth"/>
    <property type="match status" value="1"/>
</dbReference>
<dbReference type="InterPro" id="IPR028923">
    <property type="entry name" value="SAICAR_synt/ADE2_N"/>
</dbReference>
<dbReference type="InterPro" id="IPR033934">
    <property type="entry name" value="SAICAR_synt_PurC"/>
</dbReference>
<dbReference type="InterPro" id="IPR001636">
    <property type="entry name" value="SAICAR_synth"/>
</dbReference>
<dbReference type="InterPro" id="IPR050089">
    <property type="entry name" value="SAICAR_synthetase"/>
</dbReference>
<dbReference type="InterPro" id="IPR018236">
    <property type="entry name" value="SAICAR_synthetase_CS"/>
</dbReference>
<dbReference type="NCBIfam" id="TIGR00081">
    <property type="entry name" value="purC"/>
    <property type="match status" value="1"/>
</dbReference>
<dbReference type="PANTHER" id="PTHR43599">
    <property type="entry name" value="MULTIFUNCTIONAL PROTEIN ADE2"/>
    <property type="match status" value="1"/>
</dbReference>
<dbReference type="PANTHER" id="PTHR43599:SF3">
    <property type="entry name" value="SI:DKEY-6E2.2"/>
    <property type="match status" value="1"/>
</dbReference>
<dbReference type="Pfam" id="PF01259">
    <property type="entry name" value="SAICAR_synt"/>
    <property type="match status" value="1"/>
</dbReference>
<dbReference type="SUPFAM" id="SSF56104">
    <property type="entry name" value="SAICAR synthase-like"/>
    <property type="match status" value="1"/>
</dbReference>
<dbReference type="PROSITE" id="PS01057">
    <property type="entry name" value="SAICAR_SYNTHETASE_1"/>
    <property type="match status" value="1"/>
</dbReference>
<keyword id="KW-0067">ATP-binding</keyword>
<keyword id="KW-0436">Ligase</keyword>
<keyword id="KW-0547">Nucleotide-binding</keyword>
<keyword id="KW-0658">Purine biosynthesis</keyword>
<keyword id="KW-1185">Reference proteome</keyword>